<reference key="1">
    <citation type="journal article" date="2002" name="J. Bacteriol.">
        <title>Whole-genome comparison of Mycobacterium tuberculosis clinical and laboratory strains.</title>
        <authorList>
            <person name="Fleischmann R.D."/>
            <person name="Alland D."/>
            <person name="Eisen J.A."/>
            <person name="Carpenter L."/>
            <person name="White O."/>
            <person name="Peterson J.D."/>
            <person name="DeBoy R.T."/>
            <person name="Dodson R.J."/>
            <person name="Gwinn M.L."/>
            <person name="Haft D.H."/>
            <person name="Hickey E.K."/>
            <person name="Kolonay J.F."/>
            <person name="Nelson W.C."/>
            <person name="Umayam L.A."/>
            <person name="Ermolaeva M.D."/>
            <person name="Salzberg S.L."/>
            <person name="Delcher A."/>
            <person name="Utterback T.R."/>
            <person name="Weidman J.F."/>
            <person name="Khouri H.M."/>
            <person name="Gill J."/>
            <person name="Mikula A."/>
            <person name="Bishai W."/>
            <person name="Jacobs W.R. Jr."/>
            <person name="Venter J.C."/>
            <person name="Fraser C.M."/>
        </authorList>
    </citation>
    <scope>NUCLEOTIDE SEQUENCE [LARGE SCALE GENOMIC DNA]</scope>
    <source>
        <strain>CDC 1551 / Oshkosh</strain>
    </source>
</reference>
<organism>
    <name type="scientific">Mycobacterium tuberculosis (strain CDC 1551 / Oshkosh)</name>
    <dbReference type="NCBI Taxonomy" id="83331"/>
    <lineage>
        <taxon>Bacteria</taxon>
        <taxon>Bacillati</taxon>
        <taxon>Actinomycetota</taxon>
        <taxon>Actinomycetes</taxon>
        <taxon>Mycobacteriales</taxon>
        <taxon>Mycobacteriaceae</taxon>
        <taxon>Mycobacterium</taxon>
        <taxon>Mycobacterium tuberculosis complex</taxon>
    </lineage>
</organism>
<gene>
    <name type="primary">bpa</name>
    <name type="ordered locus">MT3889</name>
</gene>
<dbReference type="EMBL" id="AE000516">
    <property type="protein sequence ID" value="AAK48254.1"/>
    <property type="molecule type" value="Genomic_DNA"/>
</dbReference>
<dbReference type="PIR" id="H70695">
    <property type="entry name" value="H70695"/>
</dbReference>
<dbReference type="EMDB" id="EMD-7097"/>
<dbReference type="EMDB" id="EMD-7098"/>
<dbReference type="SMR" id="P9WKX2"/>
<dbReference type="KEGG" id="mtc:MT3889"/>
<dbReference type="HOGENOM" id="CLU_111456_0_0_11"/>
<dbReference type="Proteomes" id="UP000001020">
    <property type="component" value="Chromosome"/>
</dbReference>
<dbReference type="GO" id="GO:0000502">
    <property type="term" value="C:proteasome complex"/>
    <property type="evidence" value="ECO:0007669"/>
    <property type="project" value="UniProtKB-KW"/>
</dbReference>
<dbReference type="GO" id="GO:0061136">
    <property type="term" value="P:regulation of proteasomal protein catabolic process"/>
    <property type="evidence" value="ECO:0007669"/>
    <property type="project" value="InterPro"/>
</dbReference>
<dbReference type="InterPro" id="IPR019695">
    <property type="entry name" value="Proteasome_act"/>
</dbReference>
<dbReference type="Pfam" id="PF10759">
    <property type="entry name" value="BPA"/>
    <property type="match status" value="1"/>
</dbReference>
<evidence type="ECO:0000250" key="1">
    <source>
        <dbReference type="UniProtKB" id="P9WKX3"/>
    </source>
</evidence>
<evidence type="ECO:0000256" key="2">
    <source>
        <dbReference type="SAM" id="MobiDB-lite"/>
    </source>
</evidence>
<evidence type="ECO:0000305" key="3"/>
<feature type="chain" id="PRO_0000427579" description="Bacterial proteasome activator">
    <location>
        <begin position="1"/>
        <end position="174"/>
    </location>
</feature>
<feature type="region of interest" description="Disordered" evidence="2">
    <location>
        <begin position="153"/>
        <end position="174"/>
    </location>
</feature>
<feature type="short sequence motif" description="HbYX motif" evidence="1">
    <location>
        <begin position="172"/>
        <end position="174"/>
    </location>
</feature>
<feature type="compositionally biased region" description="Gly residues" evidence="2">
    <location>
        <begin position="161"/>
        <end position="174"/>
    </location>
</feature>
<proteinExistence type="inferred from homology"/>
<accession>P9WKX2</accession>
<accession>L0TDS4</accession>
<accession>P65091</accession>
<accession>P72046</accession>
<comment type="function">
    <text evidence="1">Interacts with the core proteasome alpha-subunit (PrcA) through its C-terminal hydrophobic-tyrosine-X motif (HbYX motif). Interaction of Bpa with the proteasome stimulates proteasomal peptidase and casein degradation activity, which suggests Bpa could play a role in the removal of non-native or damaged proteins by influencing the conformation of the proteasome complex upon interaction. Can inhibit degradation of Pup-tagged substrates in vitro by competing with Mpa for association with the proteasome.</text>
</comment>
<comment type="subunit">
    <text evidence="1">Forms a homooligomeric, either hexameric or heptameric, ring-like structure which stacks co-axially with the proteasomal alpha-rings.</text>
</comment>
<comment type="similarity">
    <text evidence="3">Belongs to the Bpa family.</text>
</comment>
<sequence length="174" mass="18944">MVIGLSTGSDDDDVEVIGGVDPRLIAVQENDSDESSLTDLVEQPAKVMRIGTMIKQLLEEVRAAPLDEASRNRLRDIHATSIRELEDGLAPELREELDRLTLPFNEDAVPSDAELRIAQAQLVGWLEGLFHGIQTALFAQQMAARAQLQQMRQGALPPGVGKSGQHGHGTGQYL</sequence>
<name>BPA_MYCTO</name>
<keyword id="KW-0647">Proteasome</keyword>
<keyword id="KW-1185">Reference proteome</keyword>
<protein>
    <recommendedName>
        <fullName evidence="1">Bacterial proteasome activator</fullName>
    </recommendedName>
</protein>